<reference key="1">
    <citation type="journal article" date="2000" name="Nature">
        <title>Genome sequence of the endocellular bacterial symbiont of aphids Buchnera sp. APS.</title>
        <authorList>
            <person name="Shigenobu S."/>
            <person name="Watanabe H."/>
            <person name="Hattori M."/>
            <person name="Sakaki Y."/>
            <person name="Ishikawa H."/>
        </authorList>
    </citation>
    <scope>NUCLEOTIDE SEQUENCE [LARGE SCALE GENOMIC DNA]</scope>
    <source>
        <strain>APS</strain>
    </source>
</reference>
<gene>
    <name type="primary">hflK</name>
    <name type="ordered locus">BU568</name>
</gene>
<protein>
    <recommendedName>
        <fullName>Protein HflK</fullName>
    </recommendedName>
</protein>
<name>HFLK_BUCAI</name>
<comment type="function">
    <text evidence="1">HflC and HflK could encode or regulate a protease.</text>
</comment>
<comment type="subunit">
    <text evidence="1">HflC and HflK may interact to form a multimeric complex.</text>
</comment>
<comment type="subcellular location">
    <subcellularLocation>
        <location evidence="4">Membrane</location>
        <topology evidence="4">Single-pass membrane protein</topology>
    </subcellularLocation>
</comment>
<comment type="similarity">
    <text evidence="4">Belongs to the band 7/mec-2 family. HflK subfamily.</text>
</comment>
<sequence>MVWNKPNNNKPDFDPWGNKDSKSKNCSDNKHEKKTTVLDIKNFLYNLKNIITKKTDSSNSSKKITYPFSIIIFISFFIWGVSGFYTITEAERGVVTSFGKFSHLVQPGLNWRPVFFNEVKPVNVETVRELATSGIMLTADENVVRVEMNVQYKITNPADYLFSVCYPDDSLRQATDSALRGVIGHSTMDRVLTEGRTLVRSDTQKEIENTIKPYKMGITILDVNFQTARPPEEVKAAFDDAIAARENREQYVREAEAYSNEVKPKANGKAQRILEEAKSYSSRIILQAQGEVARFSKILPEYRIAKKITLKRLYIESMERLLRKNKKIFIDTNNNPMFFFSLDNFFSKIKIPNKNFKDHIKINKNHSPFNKKVKNTNYFPFLSPDNISEQRRINSIRSDLKKIGRE</sequence>
<organism>
    <name type="scientific">Buchnera aphidicola subsp. Acyrthosiphon pisum (strain APS)</name>
    <name type="common">Acyrthosiphon pisum symbiotic bacterium</name>
    <dbReference type="NCBI Taxonomy" id="107806"/>
    <lineage>
        <taxon>Bacteria</taxon>
        <taxon>Pseudomonadati</taxon>
        <taxon>Pseudomonadota</taxon>
        <taxon>Gammaproteobacteria</taxon>
        <taxon>Enterobacterales</taxon>
        <taxon>Erwiniaceae</taxon>
        <taxon>Buchnera</taxon>
    </lineage>
</organism>
<accession>P57631</accession>
<keyword id="KW-0472">Membrane</keyword>
<keyword id="KW-1185">Reference proteome</keyword>
<keyword id="KW-0812">Transmembrane</keyword>
<keyword id="KW-1133">Transmembrane helix</keyword>
<dbReference type="EMBL" id="BA000003">
    <property type="protein sequence ID" value="BAB13258.1"/>
    <property type="molecule type" value="Genomic_DNA"/>
</dbReference>
<dbReference type="RefSeq" id="NP_240372.1">
    <property type="nucleotide sequence ID" value="NC_002528.1"/>
</dbReference>
<dbReference type="RefSeq" id="WP_010896165.1">
    <property type="nucleotide sequence ID" value="NC_002528.1"/>
</dbReference>
<dbReference type="SMR" id="P57631"/>
<dbReference type="STRING" id="563178.BUAP5A_561"/>
<dbReference type="EnsemblBacteria" id="BAB13258">
    <property type="protein sequence ID" value="BAB13258"/>
    <property type="gene ID" value="BAB13258"/>
</dbReference>
<dbReference type="KEGG" id="buc:BU568"/>
<dbReference type="PATRIC" id="fig|107806.10.peg.571"/>
<dbReference type="eggNOG" id="COG0330">
    <property type="taxonomic scope" value="Bacteria"/>
</dbReference>
<dbReference type="HOGENOM" id="CLU_039173_1_1_6"/>
<dbReference type="Proteomes" id="UP000001806">
    <property type="component" value="Chromosome"/>
</dbReference>
<dbReference type="GO" id="GO:0016020">
    <property type="term" value="C:membrane"/>
    <property type="evidence" value="ECO:0007669"/>
    <property type="project" value="UniProtKB-SubCell"/>
</dbReference>
<dbReference type="CDD" id="cd03404">
    <property type="entry name" value="SPFH_HflK"/>
    <property type="match status" value="1"/>
</dbReference>
<dbReference type="FunFam" id="3.30.479.30:FF:000007">
    <property type="entry name" value="Protein HflK"/>
    <property type="match status" value="1"/>
</dbReference>
<dbReference type="Gene3D" id="3.30.479.30">
    <property type="entry name" value="Band 7 domain"/>
    <property type="match status" value="1"/>
</dbReference>
<dbReference type="InterPro" id="IPR050710">
    <property type="entry name" value="Band7/mec-2_domain"/>
</dbReference>
<dbReference type="InterPro" id="IPR001107">
    <property type="entry name" value="Band_7"/>
</dbReference>
<dbReference type="InterPro" id="IPR036013">
    <property type="entry name" value="Band_7/SPFH_dom_sf"/>
</dbReference>
<dbReference type="InterPro" id="IPR010201">
    <property type="entry name" value="HflK"/>
</dbReference>
<dbReference type="NCBIfam" id="TIGR01933">
    <property type="entry name" value="hflK"/>
    <property type="match status" value="1"/>
</dbReference>
<dbReference type="PANTHER" id="PTHR43327:SF2">
    <property type="entry name" value="MODULATOR OF FTSH PROTEASE HFLK"/>
    <property type="match status" value="1"/>
</dbReference>
<dbReference type="PANTHER" id="PTHR43327">
    <property type="entry name" value="STOMATIN-LIKE PROTEIN 2, MITOCHONDRIAL"/>
    <property type="match status" value="1"/>
</dbReference>
<dbReference type="Pfam" id="PF01145">
    <property type="entry name" value="Band_7"/>
    <property type="match status" value="1"/>
</dbReference>
<dbReference type="SMART" id="SM00244">
    <property type="entry name" value="PHB"/>
    <property type="match status" value="1"/>
</dbReference>
<dbReference type="SUPFAM" id="SSF117892">
    <property type="entry name" value="Band 7/SPFH domain"/>
    <property type="match status" value="1"/>
</dbReference>
<feature type="chain" id="PRO_0000094082" description="Protein HflK">
    <location>
        <begin position="1"/>
        <end position="406"/>
    </location>
</feature>
<feature type="transmembrane region" description="Helical" evidence="2">
    <location>
        <begin position="67"/>
        <end position="87"/>
    </location>
</feature>
<feature type="region of interest" description="Disordered" evidence="3">
    <location>
        <begin position="1"/>
        <end position="29"/>
    </location>
</feature>
<feature type="compositionally biased region" description="Low complexity" evidence="3">
    <location>
        <begin position="1"/>
        <end position="10"/>
    </location>
</feature>
<feature type="compositionally biased region" description="Basic and acidic residues" evidence="3">
    <location>
        <begin position="11"/>
        <end position="29"/>
    </location>
</feature>
<evidence type="ECO:0000250" key="1"/>
<evidence type="ECO:0000255" key="2"/>
<evidence type="ECO:0000256" key="3">
    <source>
        <dbReference type="SAM" id="MobiDB-lite"/>
    </source>
</evidence>
<evidence type="ECO:0000305" key="4"/>
<proteinExistence type="inferred from homology"/>